<reference key="1">
    <citation type="journal article" date="1999" name="J. Cell Biol.">
        <title>A conserved LIM protein that affects muscular adherens junction integrity and mechanosensory function in Caenorhabditis elegans.</title>
        <authorList>
            <person name="Hobert O."/>
            <person name="Moerman D.G."/>
            <person name="Clark K.A."/>
            <person name="Beckerle M.C."/>
            <person name="Ruvkun G."/>
        </authorList>
    </citation>
    <scope>NUCLEOTIDE SEQUENCE [MRNA]</scope>
    <source>
        <strain>Bristol N2</strain>
    </source>
</reference>
<reference key="2">
    <citation type="journal article" date="1998" name="Science">
        <title>Genome sequence of the nematode C. elegans: a platform for investigating biology.</title>
        <authorList>
            <consortium name="The C. elegans sequencing consortium"/>
        </authorList>
    </citation>
    <scope>NUCLEOTIDE SEQUENCE [LARGE SCALE GENOMIC DNA]</scope>
    <source>
        <strain>Bristol N2</strain>
    </source>
</reference>
<reference key="3">
    <citation type="journal article" date="2003" name="Mol. Biol. Cell">
        <title>Caenorhabditis elegans UNC-98, a C2H2 Zn finger protein, is a novel partner of UNC-97/PINCH in muscle adhesion complexes.</title>
        <authorList>
            <person name="Mercer K.B."/>
            <person name="Flaherty D.B."/>
            <person name="Miller R.K."/>
            <person name="Qadota H."/>
            <person name="Tinley T.L."/>
            <person name="Moerman D.G."/>
            <person name="Benian G.M."/>
        </authorList>
    </citation>
    <scope>INTERACTION WITH UNC-98</scope>
</reference>
<reference key="4">
    <citation type="journal article" date="2012" name="PLoS Genet.">
        <title>Calpains mediate integrin attachment complex maintenance of adult muscle in Caenorhabditis elegans.</title>
        <authorList>
            <person name="Etheridge T."/>
            <person name="Oczypok E.A."/>
            <person name="Lehmann S."/>
            <person name="Fields B.D."/>
            <person name="Shephard F."/>
            <person name="Jacobson L.A."/>
            <person name="Szewczyk N.J."/>
        </authorList>
    </citation>
    <scope>FUNCTION</scope>
    <scope>COMPONENT OF AN INTEGRIN CONTAINING ATTACHMENT COMPLEX</scope>
    <scope>DISRUPTION PHENOTYPE</scope>
</reference>
<protein>
    <recommendedName>
        <fullName>LIM domain-containing protein unc-97</fullName>
    </recommendedName>
    <alternativeName>
        <fullName>PINCH homolog</fullName>
    </alternativeName>
    <alternativeName>
        <fullName>Uncoordinated protein 97</fullName>
    </alternativeName>
</protein>
<name>UNC97_CAEEL</name>
<accession>P50464</accession>
<dbReference type="EMBL" id="AF035583">
    <property type="protein sequence ID" value="AAD09435.1"/>
    <property type="molecule type" value="mRNA"/>
</dbReference>
<dbReference type="EMBL" id="BX284606">
    <property type="protein sequence ID" value="CCD83467.1"/>
    <property type="molecule type" value="Genomic_DNA"/>
</dbReference>
<dbReference type="PIR" id="T16076">
    <property type="entry name" value="T16076"/>
</dbReference>
<dbReference type="RefSeq" id="NP_508943.3">
    <property type="nucleotide sequence ID" value="NM_076542.5"/>
</dbReference>
<dbReference type="SMR" id="P50464"/>
<dbReference type="BioGRID" id="45760">
    <property type="interactions" value="25"/>
</dbReference>
<dbReference type="DIP" id="DIP-24818N"/>
<dbReference type="FunCoup" id="P50464">
    <property type="interactions" value="760"/>
</dbReference>
<dbReference type="IntAct" id="P50464">
    <property type="interactions" value="5"/>
</dbReference>
<dbReference type="STRING" id="6239.F14D12.2.1"/>
<dbReference type="PaxDb" id="6239-F14D12.2.1"/>
<dbReference type="PeptideAtlas" id="P50464"/>
<dbReference type="EnsemblMetazoa" id="F14D12.2.1">
    <property type="protein sequence ID" value="F14D12.2.1"/>
    <property type="gene ID" value="WBGene00006826"/>
</dbReference>
<dbReference type="GeneID" id="180827"/>
<dbReference type="KEGG" id="cel:CELE_F14D12.2"/>
<dbReference type="UCSC" id="F14D12.2.1">
    <property type="organism name" value="c. elegans"/>
</dbReference>
<dbReference type="AGR" id="WB:WBGene00006826"/>
<dbReference type="CTD" id="180827"/>
<dbReference type="WormBase" id="F14D12.2">
    <property type="protein sequence ID" value="CE04392"/>
    <property type="gene ID" value="WBGene00006826"/>
    <property type="gene designation" value="unc-97"/>
</dbReference>
<dbReference type="eggNOG" id="KOG2272">
    <property type="taxonomic scope" value="Eukaryota"/>
</dbReference>
<dbReference type="GeneTree" id="ENSGT00940000153518"/>
<dbReference type="HOGENOM" id="CLU_001357_0_0_1"/>
<dbReference type="InParanoid" id="P50464"/>
<dbReference type="OMA" id="RYVCHKC"/>
<dbReference type="OrthoDB" id="20689at2759"/>
<dbReference type="PhylomeDB" id="P50464"/>
<dbReference type="Reactome" id="R-CEL-446353">
    <property type="pathway name" value="Cell-extracellular matrix interactions"/>
</dbReference>
<dbReference type="Reactome" id="R-CEL-446388">
    <property type="pathway name" value="Regulation of cytoskeletal remodeling and cell spreading by IPP complex components"/>
</dbReference>
<dbReference type="PRO" id="PR:P50464"/>
<dbReference type="Proteomes" id="UP000001940">
    <property type="component" value="Chromosome X"/>
</dbReference>
<dbReference type="Bgee" id="WBGene00006826">
    <property type="expression patterns" value="Expressed in pharyngeal muscle cell (C elegans) and 4 other cell types or tissues"/>
</dbReference>
<dbReference type="GO" id="GO:0005912">
    <property type="term" value="C:adherens junction"/>
    <property type="evidence" value="ECO:0000314"/>
    <property type="project" value="WormBase"/>
</dbReference>
<dbReference type="GO" id="GO:0009925">
    <property type="term" value="C:basal plasma membrane"/>
    <property type="evidence" value="ECO:0000314"/>
    <property type="project" value="WormBase"/>
</dbReference>
<dbReference type="GO" id="GO:0005911">
    <property type="term" value="C:cell-cell junction"/>
    <property type="evidence" value="ECO:0000318"/>
    <property type="project" value="GO_Central"/>
</dbReference>
<dbReference type="GO" id="GO:0005737">
    <property type="term" value="C:cytoplasm"/>
    <property type="evidence" value="ECO:0000318"/>
    <property type="project" value="GO_Central"/>
</dbReference>
<dbReference type="GO" id="GO:0005925">
    <property type="term" value="C:focal adhesion"/>
    <property type="evidence" value="ECO:0000318"/>
    <property type="project" value="GO_Central"/>
</dbReference>
<dbReference type="GO" id="GO:0031430">
    <property type="term" value="C:M band"/>
    <property type="evidence" value="ECO:0000314"/>
    <property type="project" value="WormBase"/>
</dbReference>
<dbReference type="GO" id="GO:0005654">
    <property type="term" value="C:nucleoplasm"/>
    <property type="evidence" value="ECO:0000314"/>
    <property type="project" value="WormBase"/>
</dbReference>
<dbReference type="GO" id="GO:0005634">
    <property type="term" value="C:nucleus"/>
    <property type="evidence" value="ECO:0000314"/>
    <property type="project" value="WormBase"/>
</dbReference>
<dbReference type="GO" id="GO:0055120">
    <property type="term" value="C:striated muscle dense body"/>
    <property type="evidence" value="ECO:0000314"/>
    <property type="project" value="UniProtKB"/>
</dbReference>
<dbReference type="GO" id="GO:0046872">
    <property type="term" value="F:metal ion binding"/>
    <property type="evidence" value="ECO:0007669"/>
    <property type="project" value="UniProtKB-KW"/>
</dbReference>
<dbReference type="GO" id="GO:0017022">
    <property type="term" value="F:myosin binding"/>
    <property type="evidence" value="ECO:0000353"/>
    <property type="project" value="UniProtKB"/>
</dbReference>
<dbReference type="GO" id="GO:0098609">
    <property type="term" value="P:cell-cell adhesion"/>
    <property type="evidence" value="ECO:0000318"/>
    <property type="project" value="GO_Central"/>
</dbReference>
<dbReference type="GO" id="GO:0045216">
    <property type="term" value="P:cell-cell junction organization"/>
    <property type="evidence" value="ECO:0000315"/>
    <property type="project" value="WormBase"/>
</dbReference>
<dbReference type="GO" id="GO:0007005">
    <property type="term" value="P:mitochondrion organization"/>
    <property type="evidence" value="ECO:0000315"/>
    <property type="project" value="UniProtKB"/>
</dbReference>
<dbReference type="GO" id="GO:0046716">
    <property type="term" value="P:muscle cell cellular homeostasis"/>
    <property type="evidence" value="ECO:0000315"/>
    <property type="project" value="UniProtKB"/>
</dbReference>
<dbReference type="GO" id="GO:0007517">
    <property type="term" value="P:muscle organ development"/>
    <property type="evidence" value="ECO:0000315"/>
    <property type="project" value="WormBase"/>
</dbReference>
<dbReference type="GO" id="GO:2001046">
    <property type="term" value="P:positive regulation of integrin-mediated signaling pathway"/>
    <property type="evidence" value="ECO:0000318"/>
    <property type="project" value="GO_Central"/>
</dbReference>
<dbReference type="GO" id="GO:0040017">
    <property type="term" value="P:positive regulation of locomotion"/>
    <property type="evidence" value="ECO:0000315"/>
    <property type="project" value="UniProtKB"/>
</dbReference>
<dbReference type="GO" id="GO:0060298">
    <property type="term" value="P:positive regulation of sarcomere organization"/>
    <property type="evidence" value="ECO:0000315"/>
    <property type="project" value="UniProtKB"/>
</dbReference>
<dbReference type="GO" id="GO:1900026">
    <property type="term" value="P:positive regulation of substrate adhesion-dependent cell spreading"/>
    <property type="evidence" value="ECO:0000318"/>
    <property type="project" value="GO_Central"/>
</dbReference>
<dbReference type="GO" id="GO:0050954">
    <property type="term" value="P:sensory perception of mechanical stimulus"/>
    <property type="evidence" value="ECO:0000315"/>
    <property type="project" value="WormBase"/>
</dbReference>
<dbReference type="CDD" id="cd09331">
    <property type="entry name" value="LIM1_PINCH"/>
    <property type="match status" value="1"/>
</dbReference>
<dbReference type="CDD" id="cd09332">
    <property type="entry name" value="LIM2_PINCH"/>
    <property type="match status" value="1"/>
</dbReference>
<dbReference type="CDD" id="cd09333">
    <property type="entry name" value="LIM3_PINCH"/>
    <property type="match status" value="1"/>
</dbReference>
<dbReference type="CDD" id="cd09334">
    <property type="entry name" value="LIM4_PINCH"/>
    <property type="match status" value="1"/>
</dbReference>
<dbReference type="CDD" id="cd09335">
    <property type="entry name" value="LIM5_PINCH"/>
    <property type="match status" value="1"/>
</dbReference>
<dbReference type="FunFam" id="2.10.110.10:FF:000011">
    <property type="entry name" value="Lim and senescent cell antigen-like-containing"/>
    <property type="match status" value="1"/>
</dbReference>
<dbReference type="FunFam" id="2.10.110.10:FF:000017">
    <property type="entry name" value="Lim and senescent cell antigen-like-containing"/>
    <property type="match status" value="1"/>
</dbReference>
<dbReference type="FunFam" id="2.10.110.10:FF:000094">
    <property type="entry name" value="LIM domain-containing protein"/>
    <property type="match status" value="1"/>
</dbReference>
<dbReference type="FunFam" id="2.10.110.10:FF:000129">
    <property type="entry name" value="LIM domain-containing protein"/>
    <property type="match status" value="1"/>
</dbReference>
<dbReference type="FunFam" id="2.10.110.10:FF:000141">
    <property type="entry name" value="LIM domain-containing protein"/>
    <property type="match status" value="1"/>
</dbReference>
<dbReference type="Gene3D" id="2.10.110.10">
    <property type="entry name" value="Cysteine Rich Protein"/>
    <property type="match status" value="5"/>
</dbReference>
<dbReference type="InterPro" id="IPR047944">
    <property type="entry name" value="LIMS1/2-like_LIM1"/>
</dbReference>
<dbReference type="InterPro" id="IPR017351">
    <property type="entry name" value="PINCH-1-4-like"/>
</dbReference>
<dbReference type="InterPro" id="IPR047946">
    <property type="entry name" value="PINCH-1/2-like"/>
</dbReference>
<dbReference type="InterPro" id="IPR001781">
    <property type="entry name" value="Znf_LIM"/>
</dbReference>
<dbReference type="PANTHER" id="PTHR24210">
    <property type="entry name" value="LIM DOMAIN-CONTAINING PROTEIN"/>
    <property type="match status" value="1"/>
</dbReference>
<dbReference type="PANTHER" id="PTHR24210:SF0">
    <property type="entry name" value="LIM DOMAIN-CONTAINING PROTEIN"/>
    <property type="match status" value="1"/>
</dbReference>
<dbReference type="Pfam" id="PF00412">
    <property type="entry name" value="LIM"/>
    <property type="match status" value="5"/>
</dbReference>
<dbReference type="PIRSF" id="PIRSF038003">
    <property type="entry name" value="PINCH"/>
    <property type="match status" value="1"/>
</dbReference>
<dbReference type="SMART" id="SM00132">
    <property type="entry name" value="LIM"/>
    <property type="match status" value="5"/>
</dbReference>
<dbReference type="SUPFAM" id="SSF57716">
    <property type="entry name" value="Glucocorticoid receptor-like (DNA-binding domain)"/>
    <property type="match status" value="6"/>
</dbReference>
<dbReference type="PROSITE" id="PS00478">
    <property type="entry name" value="LIM_DOMAIN_1"/>
    <property type="match status" value="4"/>
</dbReference>
<dbReference type="PROSITE" id="PS50023">
    <property type="entry name" value="LIM_DOMAIN_2"/>
    <property type="match status" value="5"/>
</dbReference>
<organism>
    <name type="scientific">Caenorhabditis elegans</name>
    <dbReference type="NCBI Taxonomy" id="6239"/>
    <lineage>
        <taxon>Eukaryota</taxon>
        <taxon>Metazoa</taxon>
        <taxon>Ecdysozoa</taxon>
        <taxon>Nematoda</taxon>
        <taxon>Chromadorea</taxon>
        <taxon>Rhabditida</taxon>
        <taxon>Rhabditina</taxon>
        <taxon>Rhabditomorpha</taxon>
        <taxon>Rhabditoidea</taxon>
        <taxon>Rhabditidae</taxon>
        <taxon>Peloderinae</taxon>
        <taxon>Caenorhabditis</taxon>
    </lineage>
</organism>
<evidence type="ECO:0000255" key="1">
    <source>
        <dbReference type="PROSITE-ProRule" id="PRU00125"/>
    </source>
</evidence>
<evidence type="ECO:0000269" key="2">
    <source>
    </source>
</evidence>
<evidence type="ECO:0000269" key="3">
    <source>
    </source>
</evidence>
<evidence type="ECO:0000312" key="4">
    <source>
        <dbReference type="WormBase" id="F14D12.2"/>
    </source>
</evidence>
<proteinExistence type="evidence at protein level"/>
<keyword id="KW-0965">Cell junction</keyword>
<keyword id="KW-0440">LIM domain</keyword>
<keyword id="KW-0479">Metal-binding</keyword>
<keyword id="KW-0539">Nucleus</keyword>
<keyword id="KW-1185">Reference proteome</keyword>
<keyword id="KW-0677">Repeat</keyword>
<keyword id="KW-0862">Zinc</keyword>
<comment type="function">
    <text evidence="2 3">Component of an integrin containing attachment complex, which is required for muscle development and maintenance (PubMed:22253611). Probably function in adherens junction (PubMed:12808046). Affects the structural integrity of the integrin containing muscle adherens junctions and contributes to the mechanosensory functions of touch neurons (PubMed:12808046).</text>
</comment>
<comment type="subunit">
    <text evidence="2 3">Interacts with unc-98 (PubMed:12808046). Component of an integrin containing attachment complex, composed of at least pat-2, pat-3, pat-4, pat-6, unc-52, unc-97 and unc-112 (PubMed:22253611).</text>
</comment>
<comment type="interaction">
    <interactant intactId="EBI-319593">
        <id>P50464</id>
    </interactant>
    <interactant intactId="EBI-319599">
        <id>Q09497</id>
        <label>rsu-1</label>
    </interactant>
    <organismsDiffer>false</organismsDiffer>
    <experiments>5</experiments>
</comment>
<comment type="subcellular location">
    <subcellularLocation>
        <location>Cell junction</location>
        <location>Adherens junction</location>
    </subcellularLocation>
    <subcellularLocation>
        <location>Nucleus</location>
    </subcellularLocation>
</comment>
<comment type="tissue specificity">
    <text>Restricted to tissue types that attach to the hypodermis, specifically body wall muscles, vulval muscles, and mechanosensory neurons.</text>
</comment>
<comment type="disruption phenotype">
    <text evidence="3">RNAi-mediated knockdown results in impaired mobility, mitochondrial fragmentation and disrupted integrin attachment complexes in muscle. This leads to degradation of muscle proteins in the cytosol, myofibrillar defects and disruption of sarcomere organization.</text>
</comment>
<feature type="chain" id="PRO_0000075909" description="LIM domain-containing protein unc-97">
    <location>
        <begin position="1"/>
        <end position="348"/>
    </location>
</feature>
<feature type="domain" description="LIM zinc-binding 1" evidence="1">
    <location>
        <begin position="21"/>
        <end position="73"/>
    </location>
</feature>
<feature type="domain" description="LIM zinc-binding 2" evidence="1">
    <location>
        <begin position="82"/>
        <end position="132"/>
    </location>
</feature>
<feature type="domain" description="LIM zinc-binding 3" evidence="1">
    <location>
        <begin position="146"/>
        <end position="196"/>
    </location>
</feature>
<feature type="domain" description="LIM zinc-binding 4" evidence="1">
    <location>
        <begin position="205"/>
        <end position="255"/>
    </location>
</feature>
<feature type="domain" description="LIM zinc-binding 5" evidence="1">
    <location>
        <begin position="264"/>
        <end position="315"/>
    </location>
</feature>
<sequence length="348" mass="40308">MDSDHNHINGDLAHGFENMVCVRCNDGFSMQDQMVNSSGQVWHSECFVCAQCFEPFPDGIYFEYEGRKYCEHDFHVLFSPCCGKCNEFIVGRVIKAMNASWHPGCFCCEICNKQLADVGFLRNAGRALCRECNEREKAAGHGRYVCHKCHAMIDDGQHIKFRGDSFHPYHFKCKRCNNELTTASREVNGELYCLRCHDTMGIPICGACHRPIEERVIAALGKHWHVEHFVCSVCEKPFLGHRHYERKGLPYCEQHFHKLFGNLCFKCGDPCCGEVFQALQKTWCVKCFSCSFCDKKLDQKTKFYEFDMKPTCKRCYDRFPTELKKRISESLKDRDVENQRRSMSPGPK</sequence>
<gene>
    <name evidence="4" type="primary">unc-97</name>
    <name evidence="4" type="ORF">F14D12.2</name>
</gene>